<protein>
    <recommendedName>
        <fullName evidence="4">Peroxisomal ATPase PEX6</fullName>
        <ecNumber evidence="1">3.6.4.-</ecNumber>
    </recommendedName>
    <alternativeName>
        <fullName>Peroxin-6</fullName>
    </alternativeName>
    <alternativeName>
        <fullName>Peroxisomal biogenesis factor 6</fullName>
    </alternativeName>
</protein>
<name>PEX6_NEUCR</name>
<keyword id="KW-0067">ATP-binding</keyword>
<keyword id="KW-0963">Cytoplasm</keyword>
<keyword id="KW-0378">Hydrolase</keyword>
<keyword id="KW-0472">Membrane</keyword>
<keyword id="KW-0547">Nucleotide-binding</keyword>
<keyword id="KW-0576">Peroxisome</keyword>
<keyword id="KW-0962">Peroxisome biogenesis</keyword>
<keyword id="KW-1185">Reference proteome</keyword>
<evidence type="ECO:0000250" key="1">
    <source>
        <dbReference type="UniProtKB" id="P33760"/>
    </source>
</evidence>
<evidence type="ECO:0000255" key="2"/>
<evidence type="ECO:0000256" key="3">
    <source>
        <dbReference type="SAM" id="MobiDB-lite"/>
    </source>
</evidence>
<evidence type="ECO:0000305" key="4"/>
<organism>
    <name type="scientific">Neurospora crassa (strain ATCC 24698 / 74-OR23-1A / CBS 708.71 / DSM 1257 / FGSC 987)</name>
    <dbReference type="NCBI Taxonomy" id="367110"/>
    <lineage>
        <taxon>Eukaryota</taxon>
        <taxon>Fungi</taxon>
        <taxon>Dikarya</taxon>
        <taxon>Ascomycota</taxon>
        <taxon>Pezizomycotina</taxon>
        <taxon>Sordariomycetes</taxon>
        <taxon>Sordariomycetidae</taxon>
        <taxon>Sordariales</taxon>
        <taxon>Sordariaceae</taxon>
        <taxon>Neurospora</taxon>
    </lineage>
</organism>
<reference key="1">
    <citation type="journal article" date="2003" name="Nature">
        <title>The genome sequence of the filamentous fungus Neurospora crassa.</title>
        <authorList>
            <person name="Galagan J.E."/>
            <person name="Calvo S.E."/>
            <person name="Borkovich K.A."/>
            <person name="Selker E.U."/>
            <person name="Read N.D."/>
            <person name="Jaffe D.B."/>
            <person name="FitzHugh W."/>
            <person name="Ma L.-J."/>
            <person name="Smirnov S."/>
            <person name="Purcell S."/>
            <person name="Rehman B."/>
            <person name="Elkins T."/>
            <person name="Engels R."/>
            <person name="Wang S."/>
            <person name="Nielsen C.B."/>
            <person name="Butler J."/>
            <person name="Endrizzi M."/>
            <person name="Qui D."/>
            <person name="Ianakiev P."/>
            <person name="Bell-Pedersen D."/>
            <person name="Nelson M.A."/>
            <person name="Werner-Washburne M."/>
            <person name="Selitrennikoff C.P."/>
            <person name="Kinsey J.A."/>
            <person name="Braun E.L."/>
            <person name="Zelter A."/>
            <person name="Schulte U."/>
            <person name="Kothe G.O."/>
            <person name="Jedd G."/>
            <person name="Mewes H.-W."/>
            <person name="Staben C."/>
            <person name="Marcotte E."/>
            <person name="Greenberg D."/>
            <person name="Roy A."/>
            <person name="Foley K."/>
            <person name="Naylor J."/>
            <person name="Stange-Thomann N."/>
            <person name="Barrett R."/>
            <person name="Gnerre S."/>
            <person name="Kamal M."/>
            <person name="Kamvysselis M."/>
            <person name="Mauceli E.W."/>
            <person name="Bielke C."/>
            <person name="Rudd S."/>
            <person name="Frishman D."/>
            <person name="Krystofova S."/>
            <person name="Rasmussen C."/>
            <person name="Metzenberg R.L."/>
            <person name="Perkins D.D."/>
            <person name="Kroken S."/>
            <person name="Cogoni C."/>
            <person name="Macino G."/>
            <person name="Catcheside D.E.A."/>
            <person name="Li W."/>
            <person name="Pratt R.J."/>
            <person name="Osmani S.A."/>
            <person name="DeSouza C.P.C."/>
            <person name="Glass N.L."/>
            <person name="Orbach M.J."/>
            <person name="Berglund J.A."/>
            <person name="Voelker R."/>
            <person name="Yarden O."/>
            <person name="Plamann M."/>
            <person name="Seiler S."/>
            <person name="Dunlap J.C."/>
            <person name="Radford A."/>
            <person name="Aramayo R."/>
            <person name="Natvig D.O."/>
            <person name="Alex L.A."/>
            <person name="Mannhaupt G."/>
            <person name="Ebbole D.J."/>
            <person name="Freitag M."/>
            <person name="Paulsen I."/>
            <person name="Sachs M.S."/>
            <person name="Lander E.S."/>
            <person name="Nusbaum C."/>
            <person name="Birren B.W."/>
        </authorList>
    </citation>
    <scope>NUCLEOTIDE SEQUENCE [LARGE SCALE GENOMIC DNA]</scope>
    <source>
        <strain>ATCC 24698 / 74-OR23-1A / CBS 708.71 / DSM 1257 / FGSC 987</strain>
    </source>
</reference>
<sequence length="1381" mass="148374">MTAPNSTPASSRKRVRRRRQDKPALSAKLVLDAHVKGDVGVIATDLFADLFPHLWANGDSQDTVHVAIAPWAPSQTPEANNWSIVPVIRSSTVAPSTVQFSPSSLALQSFATHLQQAAPSKLSGHNKGGIEILILDVSPIELDTVFVNLDGELAKRLEDGEGTFFREHPVNGKGKARADATPEEHLTAALRTALGTLKIVHSGDFFPLPLPPHPVTHQPPNPGRITLCEPVAQGILAPTTKIIVSRVRTSKTKRSSASGQQQGRKLNGVAEDDEDAYFSAAEEDRDSKTNAQTAETDADDTEFEPQAGEDEDNLSDDSLDEIISLQVPTLPTTVTGQSTIGTGTPTMLRGRKTNGPGSVISSYTATTARPDRPRGRLFKAHGLMKPIPPDLLHPKPTPEDDEEACIYVDMRDLTRVGCFSGDWIRVEAASEPPSNGLGAFGLGSFVEQEADEINWRPARVFGLPEGYSSRSATRSHHSRHDSRNSSFFEAQSQKSNPPAYTSPILLANLDNPPYLRLSPIKRPSSSIIKGVAAQSKTSSTLKPPFAREVILQHVRTPTAVERDVQSAVMAGLKHYFERRLRVLRTGDLIAVPIDTQLGKALQESTIPGEDSAIDEVLGLIAATRPGQSLHYDDVAWFRVGHVQAMKQDTTEAVDGEEAEDLWGGIACVDISLTHLEQSGSVTGRIPGTISNSWQYYLGIRKLPKHQQNPGLPAQLQTLEPEKQYVSSLRRKLRELMAAATSKPALHLNLPPLAILLVSTQRHIGKAATAMQACSDIGLHTFAIDAYDIVNDGGGGGGSDVKTAGFLTSRAERAMSCGPESCVLLVRHIEALTADRMVSSIKEILADARVLIATTTEVEKVPDGIRALFTHELEMSAPDEQEREGILSSILADRGIGLDHGVDLSGIALKTAALVAGDLVDVVDRALVAQRSRLEKLTAKATGSITFRDVQLAGGPAASGLTKQDFELAVDAARKNFADSIGAPKIPNVTWDDVGGLGNVKDAITETIQLPLERPELFAKGMKKRSGILFYGPPGTGKTLLAKAIATEYSLNFFSVKGPELLNMYIGESEANVRRVFQRARDARPCVVFFDELDSVAPKRGNQGDSGGVMDRIVSQLLAELDGMSGGEGGGGGVFVIGATNRPDLLDPALLRPGRFDKMLYLGVSDTHDKQVTIMEALTRKFTLHPTVSLRSVAERLPFTYTGADFYALCSDAMLKAVTRQATLVDTKIRELNAAAGPEGKQISTAYFFDHYATKEDISVMVTEQDFLDAHRELVPSVSAGELEHYEQVRAMFEGAKDKDKKKEGAGGDGNGVDGLESGNRNGMLAITMGDDGAGAESTKKDGKGKGKAADNEVNGAGEGKGKEGVSPFQESGGDEDEGLYD</sequence>
<proteinExistence type="inferred from homology"/>
<feature type="chain" id="PRO_0000084615" description="Peroxisomal ATPase PEX6">
    <location>
        <begin position="1"/>
        <end position="1381"/>
    </location>
</feature>
<feature type="region of interest" description="Disordered" evidence="3">
    <location>
        <begin position="1"/>
        <end position="23"/>
    </location>
</feature>
<feature type="region of interest" description="Disordered" evidence="3">
    <location>
        <begin position="247"/>
        <end position="315"/>
    </location>
</feature>
<feature type="region of interest" description="Disordered" evidence="3">
    <location>
        <begin position="333"/>
        <end position="374"/>
    </location>
</feature>
<feature type="region of interest" description="Disordered" evidence="3">
    <location>
        <begin position="467"/>
        <end position="499"/>
    </location>
</feature>
<feature type="region of interest" description="Disordered" evidence="3">
    <location>
        <begin position="1294"/>
        <end position="1381"/>
    </location>
</feature>
<feature type="compositionally biased region" description="Polar residues" evidence="3">
    <location>
        <begin position="1"/>
        <end position="10"/>
    </location>
</feature>
<feature type="compositionally biased region" description="Basic residues" evidence="3">
    <location>
        <begin position="11"/>
        <end position="20"/>
    </location>
</feature>
<feature type="compositionally biased region" description="Acidic residues" evidence="3">
    <location>
        <begin position="270"/>
        <end position="284"/>
    </location>
</feature>
<feature type="compositionally biased region" description="Acidic residues" evidence="3">
    <location>
        <begin position="296"/>
        <end position="315"/>
    </location>
</feature>
<feature type="compositionally biased region" description="Polar residues" evidence="3">
    <location>
        <begin position="333"/>
        <end position="345"/>
    </location>
</feature>
<feature type="compositionally biased region" description="Polar residues" evidence="3">
    <location>
        <begin position="355"/>
        <end position="367"/>
    </location>
</feature>
<feature type="compositionally biased region" description="Polar residues" evidence="3">
    <location>
        <begin position="487"/>
        <end position="499"/>
    </location>
</feature>
<feature type="compositionally biased region" description="Basic and acidic residues" evidence="3">
    <location>
        <begin position="1294"/>
        <end position="1305"/>
    </location>
</feature>
<feature type="compositionally biased region" description="Basic and acidic residues" evidence="3">
    <location>
        <begin position="1337"/>
        <end position="1350"/>
    </location>
</feature>
<feature type="compositionally biased region" description="Acidic residues" evidence="3">
    <location>
        <begin position="1372"/>
        <end position="1381"/>
    </location>
</feature>
<feature type="binding site" evidence="2">
    <location>
        <begin position="1031"/>
        <end position="1038"/>
    </location>
    <ligand>
        <name>ATP</name>
        <dbReference type="ChEBI" id="CHEBI:30616"/>
    </ligand>
</feature>
<gene>
    <name type="primary">pex-6</name>
    <name type="ORF">NCU08373</name>
</gene>
<comment type="function">
    <text evidence="1">Component of the PEX1-PEX6 AAA ATPase complex, a protein dislocase complex that mediates the ATP-dependent extraction of the PEX5 receptor from peroxisomal membranes, an essential step for PEX5 recycling. Specifically recognizes PEX5 monoubiquitinated at 'Cys-6', and pulls it out of the peroxisome lumen through the PEX2-PEX10-PEX12 retrotranslocation channel. Extraction by the PEX1-PEX6 AAA ATPase complex is accompanied by unfolding of the TPR repeats and release of bound cargo from PEX5.</text>
</comment>
<comment type="catalytic activity">
    <reaction evidence="1">
        <text>ATP + H2O = ADP + phosphate + H(+)</text>
        <dbReference type="Rhea" id="RHEA:13065"/>
        <dbReference type="ChEBI" id="CHEBI:15377"/>
        <dbReference type="ChEBI" id="CHEBI:15378"/>
        <dbReference type="ChEBI" id="CHEBI:30616"/>
        <dbReference type="ChEBI" id="CHEBI:43474"/>
        <dbReference type="ChEBI" id="CHEBI:456216"/>
    </reaction>
    <physiologicalReaction direction="left-to-right" evidence="1">
        <dbReference type="Rhea" id="RHEA:13066"/>
    </physiologicalReaction>
</comment>
<comment type="subunit">
    <text evidence="1">Interacts with PEX1; forming the PEX1-PEX6 AAA ATPase complex, which is composed of a heterohexamer formed by a trimer of PEX1-PEX6 dimers.</text>
</comment>
<comment type="subcellular location">
    <subcellularLocation>
        <location evidence="1">Cytoplasm</location>
        <location evidence="1">Cytosol</location>
    </subcellularLocation>
    <subcellularLocation>
        <location evidence="1">Peroxisome membrane</location>
        <topology evidence="1">Peripheral membrane protein</topology>
        <orientation evidence="1">Cytoplasmic side</orientation>
    </subcellularLocation>
</comment>
<comment type="similarity">
    <text evidence="4">Belongs to the AAA ATPase family.</text>
</comment>
<accession>Q7SGP2</accession>
<dbReference type="EC" id="3.6.4.-" evidence="1"/>
<dbReference type="EMBL" id="CM002236">
    <property type="protein sequence ID" value="EAA36040.1"/>
    <property type="molecule type" value="Genomic_DNA"/>
</dbReference>
<dbReference type="SMR" id="Q7SGP2"/>
<dbReference type="FunCoup" id="Q7SGP2">
    <property type="interactions" value="271"/>
</dbReference>
<dbReference type="STRING" id="367110.Q7SGP2"/>
<dbReference type="PaxDb" id="5141-EFNCRP00000006478"/>
<dbReference type="EnsemblFungi" id="EAA36040">
    <property type="protein sequence ID" value="EAA36040"/>
    <property type="gene ID" value="NCU08373"/>
</dbReference>
<dbReference type="KEGG" id="ncr:NCU08373"/>
<dbReference type="VEuPathDB" id="FungiDB:NCU08373"/>
<dbReference type="HOGENOM" id="CLU_000688_0_2_1"/>
<dbReference type="InParanoid" id="Q7SGP2"/>
<dbReference type="OMA" id="KIMLCEP"/>
<dbReference type="OrthoDB" id="5553750at2759"/>
<dbReference type="Proteomes" id="UP000001805">
    <property type="component" value="Chromosome 1, Linkage Group I"/>
</dbReference>
<dbReference type="GO" id="GO:0005829">
    <property type="term" value="C:cytosol"/>
    <property type="evidence" value="ECO:0000318"/>
    <property type="project" value="GO_Central"/>
</dbReference>
<dbReference type="GO" id="GO:0005778">
    <property type="term" value="C:peroxisomal membrane"/>
    <property type="evidence" value="ECO:0000318"/>
    <property type="project" value="GO_Central"/>
</dbReference>
<dbReference type="GO" id="GO:0005524">
    <property type="term" value="F:ATP binding"/>
    <property type="evidence" value="ECO:0007669"/>
    <property type="project" value="UniProtKB-KW"/>
</dbReference>
<dbReference type="GO" id="GO:0016887">
    <property type="term" value="F:ATP hydrolysis activity"/>
    <property type="evidence" value="ECO:0000318"/>
    <property type="project" value="GO_Central"/>
</dbReference>
<dbReference type="GO" id="GO:0016558">
    <property type="term" value="P:protein import into peroxisome matrix"/>
    <property type="evidence" value="ECO:0000318"/>
    <property type="project" value="GO_Central"/>
</dbReference>
<dbReference type="GO" id="GO:0043335">
    <property type="term" value="P:protein unfolding"/>
    <property type="evidence" value="ECO:0000318"/>
    <property type="project" value="GO_Central"/>
</dbReference>
<dbReference type="CDD" id="cd19527">
    <property type="entry name" value="RecA-like_PEX6_r2"/>
    <property type="match status" value="1"/>
</dbReference>
<dbReference type="FunFam" id="3.40.50.300:FF:000109">
    <property type="entry name" value="Peroxisomal biogenesis factor 6"/>
    <property type="match status" value="1"/>
</dbReference>
<dbReference type="FunFam" id="1.10.8.60:FF:000039">
    <property type="entry name" value="peroxisome biogenesis factor 6"/>
    <property type="match status" value="1"/>
</dbReference>
<dbReference type="Gene3D" id="1.10.8.60">
    <property type="match status" value="2"/>
</dbReference>
<dbReference type="Gene3D" id="3.40.50.300">
    <property type="entry name" value="P-loop containing nucleotide triphosphate hydrolases"/>
    <property type="match status" value="2"/>
</dbReference>
<dbReference type="InterPro" id="IPR003593">
    <property type="entry name" value="AAA+_ATPase"/>
</dbReference>
<dbReference type="InterPro" id="IPR050168">
    <property type="entry name" value="AAA_ATPase_domain"/>
</dbReference>
<dbReference type="InterPro" id="IPR003959">
    <property type="entry name" value="ATPase_AAA_core"/>
</dbReference>
<dbReference type="InterPro" id="IPR003960">
    <property type="entry name" value="ATPase_AAA_CS"/>
</dbReference>
<dbReference type="InterPro" id="IPR027417">
    <property type="entry name" value="P-loop_NTPase"/>
</dbReference>
<dbReference type="InterPro" id="IPR056995">
    <property type="entry name" value="PEX6_4th_dom"/>
</dbReference>
<dbReference type="InterPro" id="IPR047533">
    <property type="entry name" value="RecA-like_PEX6_r2"/>
</dbReference>
<dbReference type="PANTHER" id="PTHR23077">
    <property type="entry name" value="AAA-FAMILY ATPASE"/>
    <property type="match status" value="1"/>
</dbReference>
<dbReference type="PANTHER" id="PTHR23077:SF9">
    <property type="entry name" value="PEROXISOMAL ATPASE PEX6"/>
    <property type="match status" value="1"/>
</dbReference>
<dbReference type="Pfam" id="PF00004">
    <property type="entry name" value="AAA"/>
    <property type="match status" value="1"/>
</dbReference>
<dbReference type="Pfam" id="PF23315">
    <property type="entry name" value="PEX6_4th"/>
    <property type="match status" value="1"/>
</dbReference>
<dbReference type="Pfam" id="PF23120">
    <property type="entry name" value="PEX6_N"/>
    <property type="match status" value="1"/>
</dbReference>
<dbReference type="SMART" id="SM00382">
    <property type="entry name" value="AAA"/>
    <property type="match status" value="2"/>
</dbReference>
<dbReference type="SUPFAM" id="SSF52540">
    <property type="entry name" value="P-loop containing nucleoside triphosphate hydrolases"/>
    <property type="match status" value="2"/>
</dbReference>
<dbReference type="PROSITE" id="PS00674">
    <property type="entry name" value="AAA"/>
    <property type="match status" value="1"/>
</dbReference>